<sequence length="458" mass="48599">MFRPEEIIETIKMIKMENLDLRTVTLGLSLRDCVSKDLDELKENIYNKITSSAENLVETAERISEKYGIPIVNKRIAVTPISLVIGGAIKDLDKEEQIKACVEVGEVLDKAAKKVRVDFLGGYSALVHKDATKEDRALIDSIPFMMEKTERVCSSVNVASTKTGINMDAVKRMGEIIKETAFRTEKAIGCAKLVVFANAPEDNPFMAGAFHGVGEGDKVINVGVSGPGVVRAVIEKLPDADFGTLANEIKKVAFKITRVGELIGREVSKELGVKFGVVDLSLAPTPARGDSIANILEAMGLEKCGTHGSTAALALLNDAVKKGGAMATSYVGGLSGAFIPVSEDSGMVEAVEAGALTLEKLEAMTCVCSVGIDMVAIPGDTPASTISAIIADEMAIGVINNKTTAVRIIPVPGKKAGEYVDYGGLLGKAPIMEVNKYSSEKFIKRGGRIPAPLQALTN</sequence>
<name>Y1665_METJA</name>
<gene>
    <name type="ordered locus">MJ1665</name>
</gene>
<organism>
    <name type="scientific">Methanocaldococcus jannaschii (strain ATCC 43067 / DSM 2661 / JAL-1 / JCM 10045 / NBRC 100440)</name>
    <name type="common">Methanococcus jannaschii</name>
    <dbReference type="NCBI Taxonomy" id="243232"/>
    <lineage>
        <taxon>Archaea</taxon>
        <taxon>Methanobacteriati</taxon>
        <taxon>Methanobacteriota</taxon>
        <taxon>Methanomada group</taxon>
        <taxon>Methanococci</taxon>
        <taxon>Methanococcales</taxon>
        <taxon>Methanocaldococcaceae</taxon>
        <taxon>Methanocaldococcus</taxon>
    </lineage>
</organism>
<protein>
    <recommendedName>
        <fullName evidence="1">UPF0210 protein MJ1665</fullName>
    </recommendedName>
</protein>
<feature type="chain" id="PRO_0000070564" description="UPF0210 protein MJ1665">
    <location>
        <begin position="1"/>
        <end position="458"/>
    </location>
</feature>
<accession>Q59059</accession>
<proteinExistence type="inferred from homology"/>
<reference key="1">
    <citation type="journal article" date="1996" name="Science">
        <title>Complete genome sequence of the methanogenic archaeon, Methanococcus jannaschii.</title>
        <authorList>
            <person name="Bult C.J."/>
            <person name="White O."/>
            <person name="Olsen G.J."/>
            <person name="Zhou L."/>
            <person name="Fleischmann R.D."/>
            <person name="Sutton G.G."/>
            <person name="Blake J.A."/>
            <person name="FitzGerald L.M."/>
            <person name="Clayton R.A."/>
            <person name="Gocayne J.D."/>
            <person name="Kerlavage A.R."/>
            <person name="Dougherty B.A."/>
            <person name="Tomb J.-F."/>
            <person name="Adams M.D."/>
            <person name="Reich C.I."/>
            <person name="Overbeek R."/>
            <person name="Kirkness E.F."/>
            <person name="Weinstock K.G."/>
            <person name="Merrick J.M."/>
            <person name="Glodek A."/>
            <person name="Scott J.L."/>
            <person name="Geoghagen N.S.M."/>
            <person name="Weidman J.F."/>
            <person name="Fuhrmann J.L."/>
            <person name="Nguyen D."/>
            <person name="Utterback T.R."/>
            <person name="Kelley J.M."/>
            <person name="Peterson J.D."/>
            <person name="Sadow P.W."/>
            <person name="Hanna M.C."/>
            <person name="Cotton M.D."/>
            <person name="Roberts K.M."/>
            <person name="Hurst M.A."/>
            <person name="Kaine B.P."/>
            <person name="Borodovsky M."/>
            <person name="Klenk H.-P."/>
            <person name="Fraser C.M."/>
            <person name="Smith H.O."/>
            <person name="Woese C.R."/>
            <person name="Venter J.C."/>
        </authorList>
    </citation>
    <scope>NUCLEOTIDE SEQUENCE [LARGE SCALE GENOMIC DNA]</scope>
    <source>
        <strain>ATCC 43067 / DSM 2661 / JAL-1 / JCM 10045 / NBRC 100440</strain>
    </source>
</reference>
<evidence type="ECO:0000255" key="1">
    <source>
        <dbReference type="HAMAP-Rule" id="MF_01221"/>
    </source>
</evidence>
<comment type="similarity">
    <text evidence="1">Belongs to the UPF0210 family.</text>
</comment>
<dbReference type="EMBL" id="L77117">
    <property type="protein sequence ID" value="AAB99687.1"/>
    <property type="molecule type" value="Genomic_DNA"/>
</dbReference>
<dbReference type="PIR" id="G64507">
    <property type="entry name" value="G64507"/>
</dbReference>
<dbReference type="RefSeq" id="WP_010871189.1">
    <property type="nucleotide sequence ID" value="NC_000909.1"/>
</dbReference>
<dbReference type="SMR" id="Q59059"/>
<dbReference type="STRING" id="243232.MJ_1665"/>
<dbReference type="PaxDb" id="243232-MJ_1665"/>
<dbReference type="EnsemblBacteria" id="AAB99687">
    <property type="protein sequence ID" value="AAB99687"/>
    <property type="gene ID" value="MJ_1665"/>
</dbReference>
<dbReference type="GeneID" id="1452574"/>
<dbReference type="KEGG" id="mja:MJ_1665"/>
<dbReference type="eggNOG" id="arCOG04321">
    <property type="taxonomic scope" value="Archaea"/>
</dbReference>
<dbReference type="HOGENOM" id="CLU_048704_0_0_2"/>
<dbReference type="InParanoid" id="Q59059"/>
<dbReference type="OrthoDB" id="21376at2157"/>
<dbReference type="PhylomeDB" id="Q59059"/>
<dbReference type="Proteomes" id="UP000000805">
    <property type="component" value="Chromosome"/>
</dbReference>
<dbReference type="CDD" id="cd08025">
    <property type="entry name" value="RNR_PFL_like_DUF711"/>
    <property type="match status" value="1"/>
</dbReference>
<dbReference type="Gene3D" id="3.20.70.20">
    <property type="match status" value="1"/>
</dbReference>
<dbReference type="HAMAP" id="MF_01221">
    <property type="entry name" value="UPF0210"/>
    <property type="match status" value="1"/>
</dbReference>
<dbReference type="InterPro" id="IPR007841">
    <property type="entry name" value="UPF0210"/>
</dbReference>
<dbReference type="NCBIfam" id="NF003700">
    <property type="entry name" value="PRK05313.1"/>
    <property type="match status" value="1"/>
</dbReference>
<dbReference type="PANTHER" id="PTHR37560:SF1">
    <property type="entry name" value="UPF0210 PROTEIN MJ1665"/>
    <property type="match status" value="1"/>
</dbReference>
<dbReference type="PANTHER" id="PTHR37560">
    <property type="entry name" value="UPF0210 PROTEIN SPR0218"/>
    <property type="match status" value="1"/>
</dbReference>
<dbReference type="Pfam" id="PF05167">
    <property type="entry name" value="DUF711"/>
    <property type="match status" value="1"/>
</dbReference>
<dbReference type="SUPFAM" id="SSF51998">
    <property type="entry name" value="PFL-like glycyl radical enzymes"/>
    <property type="match status" value="1"/>
</dbReference>
<keyword id="KW-1185">Reference proteome</keyword>